<evidence type="ECO:0000255" key="1">
    <source>
        <dbReference type="HAMAP-Rule" id="MF_00274"/>
    </source>
</evidence>
<dbReference type="EMBL" id="CP000509">
    <property type="protein sequence ID" value="ABL79862.1"/>
    <property type="molecule type" value="Genomic_DNA"/>
</dbReference>
<dbReference type="RefSeq" id="WP_011753813.1">
    <property type="nucleotide sequence ID" value="NC_008699.1"/>
</dbReference>
<dbReference type="SMR" id="A1SDH7"/>
<dbReference type="STRING" id="196162.Noca_0318"/>
<dbReference type="KEGG" id="nca:Noca_0318"/>
<dbReference type="eggNOG" id="COG0718">
    <property type="taxonomic scope" value="Bacteria"/>
</dbReference>
<dbReference type="HOGENOM" id="CLU_140930_4_0_11"/>
<dbReference type="Proteomes" id="UP000000640">
    <property type="component" value="Chromosome"/>
</dbReference>
<dbReference type="GO" id="GO:0043590">
    <property type="term" value="C:bacterial nucleoid"/>
    <property type="evidence" value="ECO:0007669"/>
    <property type="project" value="UniProtKB-UniRule"/>
</dbReference>
<dbReference type="GO" id="GO:0005829">
    <property type="term" value="C:cytosol"/>
    <property type="evidence" value="ECO:0007669"/>
    <property type="project" value="TreeGrafter"/>
</dbReference>
<dbReference type="GO" id="GO:0003677">
    <property type="term" value="F:DNA binding"/>
    <property type="evidence" value="ECO:0007669"/>
    <property type="project" value="UniProtKB-UniRule"/>
</dbReference>
<dbReference type="Gene3D" id="3.30.1310.10">
    <property type="entry name" value="Nucleoid-associated protein YbaB-like domain"/>
    <property type="match status" value="1"/>
</dbReference>
<dbReference type="HAMAP" id="MF_00274">
    <property type="entry name" value="DNA_YbaB_EbfC"/>
    <property type="match status" value="1"/>
</dbReference>
<dbReference type="InterPro" id="IPR036894">
    <property type="entry name" value="YbaB-like_sf"/>
</dbReference>
<dbReference type="InterPro" id="IPR004401">
    <property type="entry name" value="YbaB/EbfC"/>
</dbReference>
<dbReference type="NCBIfam" id="TIGR00103">
    <property type="entry name" value="DNA_YbaB_EbfC"/>
    <property type="match status" value="1"/>
</dbReference>
<dbReference type="PANTHER" id="PTHR33449">
    <property type="entry name" value="NUCLEOID-ASSOCIATED PROTEIN YBAB"/>
    <property type="match status" value="1"/>
</dbReference>
<dbReference type="PANTHER" id="PTHR33449:SF1">
    <property type="entry name" value="NUCLEOID-ASSOCIATED PROTEIN YBAB"/>
    <property type="match status" value="1"/>
</dbReference>
<dbReference type="Pfam" id="PF02575">
    <property type="entry name" value="YbaB_DNA_bd"/>
    <property type="match status" value="1"/>
</dbReference>
<dbReference type="PIRSF" id="PIRSF004555">
    <property type="entry name" value="UCP004555"/>
    <property type="match status" value="1"/>
</dbReference>
<dbReference type="SUPFAM" id="SSF82607">
    <property type="entry name" value="YbaB-like"/>
    <property type="match status" value="1"/>
</dbReference>
<feature type="chain" id="PRO_1000197669" description="Nucleoid-associated protein Noca_0318">
    <location>
        <begin position="1"/>
        <end position="124"/>
    </location>
</feature>
<name>Y318_NOCSJ</name>
<gene>
    <name type="ordered locus">Noca_0318</name>
</gene>
<accession>A1SDH7</accession>
<sequence length="124" mass="12491">MSQNPFEALGGGGFDMNALLQQAQQMQEQLQSAQERLTETVVDGTVAGGAVTVKVNGVGELVGVEIRAGGFDGSDPDDLSDLGDMIIAAYRDAKAQADALAGEALGPLAGGAEGLPGMPGQLGF</sequence>
<proteinExistence type="inferred from homology"/>
<keyword id="KW-0963">Cytoplasm</keyword>
<keyword id="KW-0238">DNA-binding</keyword>
<keyword id="KW-1185">Reference proteome</keyword>
<organism>
    <name type="scientific">Nocardioides sp. (strain ATCC BAA-499 / JS614)</name>
    <dbReference type="NCBI Taxonomy" id="196162"/>
    <lineage>
        <taxon>Bacteria</taxon>
        <taxon>Bacillati</taxon>
        <taxon>Actinomycetota</taxon>
        <taxon>Actinomycetes</taxon>
        <taxon>Propionibacteriales</taxon>
        <taxon>Nocardioidaceae</taxon>
        <taxon>Nocardioides</taxon>
    </lineage>
</organism>
<protein>
    <recommendedName>
        <fullName evidence="1">Nucleoid-associated protein Noca_0318</fullName>
    </recommendedName>
</protein>
<comment type="function">
    <text evidence="1">Binds to DNA and alters its conformation. May be involved in regulation of gene expression, nucleoid organization and DNA protection.</text>
</comment>
<comment type="subunit">
    <text evidence="1">Homodimer.</text>
</comment>
<comment type="subcellular location">
    <subcellularLocation>
        <location evidence="1">Cytoplasm</location>
        <location evidence="1">Nucleoid</location>
    </subcellularLocation>
</comment>
<comment type="similarity">
    <text evidence="1">Belongs to the YbaB/EbfC family.</text>
</comment>
<reference key="1">
    <citation type="submission" date="2006-12" db="EMBL/GenBank/DDBJ databases">
        <title>Complete sequence of chromosome 1 of Nocardioides sp. JS614.</title>
        <authorList>
            <person name="Copeland A."/>
            <person name="Lucas S."/>
            <person name="Lapidus A."/>
            <person name="Barry K."/>
            <person name="Detter J.C."/>
            <person name="Glavina del Rio T."/>
            <person name="Hammon N."/>
            <person name="Israni S."/>
            <person name="Dalin E."/>
            <person name="Tice H."/>
            <person name="Pitluck S."/>
            <person name="Thompson L.S."/>
            <person name="Brettin T."/>
            <person name="Bruce D."/>
            <person name="Han C."/>
            <person name="Tapia R."/>
            <person name="Schmutz J."/>
            <person name="Larimer F."/>
            <person name="Land M."/>
            <person name="Hauser L."/>
            <person name="Kyrpides N."/>
            <person name="Kim E."/>
            <person name="Mattes T."/>
            <person name="Gossett J."/>
            <person name="Richardson P."/>
        </authorList>
    </citation>
    <scope>NUCLEOTIDE SEQUENCE [LARGE SCALE GENOMIC DNA]</scope>
    <source>
        <strain>ATCC BAA-499 / JS614</strain>
    </source>
</reference>